<comment type="function">
    <text evidence="1">Involved in the modulation of the specificity of the ClpAP-mediated ATP-dependent protein degradation.</text>
</comment>
<comment type="subunit">
    <text evidence="1">Binds to the N-terminal domain of the chaperone ClpA.</text>
</comment>
<comment type="similarity">
    <text evidence="1">Belongs to the ClpS family.</text>
</comment>
<organism>
    <name type="scientific">Albidiferax ferrireducens (strain ATCC BAA-621 / DSM 15236 / T118)</name>
    <name type="common">Rhodoferax ferrireducens</name>
    <dbReference type="NCBI Taxonomy" id="338969"/>
    <lineage>
        <taxon>Bacteria</taxon>
        <taxon>Pseudomonadati</taxon>
        <taxon>Pseudomonadota</taxon>
        <taxon>Betaproteobacteria</taxon>
        <taxon>Burkholderiales</taxon>
        <taxon>Comamonadaceae</taxon>
        <taxon>Rhodoferax</taxon>
    </lineage>
</organism>
<sequence length="120" mass="13208">MATKSPVNPKVPLVQEPDRDEGGAVVLERRTQKTKPPHMYQVVMLNDDYTPMEFVVVVIQEFFGKDLEAATRIMLKIHLDGKGVCGVYSKDVAATKVDQVLDAANKAGHPLKCISEPVGF</sequence>
<proteinExistence type="inferred from homology"/>
<dbReference type="EMBL" id="CP000267">
    <property type="protein sequence ID" value="ABD70472.1"/>
    <property type="molecule type" value="Genomic_DNA"/>
</dbReference>
<dbReference type="RefSeq" id="WP_011465038.1">
    <property type="nucleotide sequence ID" value="NC_007908.1"/>
</dbReference>
<dbReference type="SMR" id="Q21UT1"/>
<dbReference type="STRING" id="338969.Rfer_2760"/>
<dbReference type="KEGG" id="rfr:Rfer_2760"/>
<dbReference type="eggNOG" id="COG2127">
    <property type="taxonomic scope" value="Bacteria"/>
</dbReference>
<dbReference type="HOGENOM" id="CLU_134358_2_1_4"/>
<dbReference type="OrthoDB" id="9796121at2"/>
<dbReference type="Proteomes" id="UP000008332">
    <property type="component" value="Chromosome"/>
</dbReference>
<dbReference type="GO" id="GO:0030163">
    <property type="term" value="P:protein catabolic process"/>
    <property type="evidence" value="ECO:0007669"/>
    <property type="project" value="InterPro"/>
</dbReference>
<dbReference type="GO" id="GO:0006508">
    <property type="term" value="P:proteolysis"/>
    <property type="evidence" value="ECO:0007669"/>
    <property type="project" value="UniProtKB-UniRule"/>
</dbReference>
<dbReference type="FunFam" id="3.30.1390.10:FF:000002">
    <property type="entry name" value="ATP-dependent Clp protease adapter protein ClpS"/>
    <property type="match status" value="1"/>
</dbReference>
<dbReference type="Gene3D" id="3.30.1390.10">
    <property type="match status" value="1"/>
</dbReference>
<dbReference type="HAMAP" id="MF_00302">
    <property type="entry name" value="ClpS"/>
    <property type="match status" value="1"/>
</dbReference>
<dbReference type="InterPro" id="IPR022935">
    <property type="entry name" value="ClpS"/>
</dbReference>
<dbReference type="InterPro" id="IPR003769">
    <property type="entry name" value="ClpS_core"/>
</dbReference>
<dbReference type="InterPro" id="IPR014719">
    <property type="entry name" value="Ribosomal_bL12_C/ClpS-like"/>
</dbReference>
<dbReference type="NCBIfam" id="NF000672">
    <property type="entry name" value="PRK00033.1-5"/>
    <property type="match status" value="1"/>
</dbReference>
<dbReference type="PANTHER" id="PTHR33473:SF19">
    <property type="entry name" value="ATP-DEPENDENT CLP PROTEASE ADAPTER PROTEIN CLPS"/>
    <property type="match status" value="1"/>
</dbReference>
<dbReference type="PANTHER" id="PTHR33473">
    <property type="entry name" value="ATP-DEPENDENT CLP PROTEASE ADAPTER PROTEIN CLPS1, CHLOROPLASTIC"/>
    <property type="match status" value="1"/>
</dbReference>
<dbReference type="Pfam" id="PF02617">
    <property type="entry name" value="ClpS"/>
    <property type="match status" value="1"/>
</dbReference>
<dbReference type="SUPFAM" id="SSF54736">
    <property type="entry name" value="ClpS-like"/>
    <property type="match status" value="1"/>
</dbReference>
<evidence type="ECO:0000255" key="1">
    <source>
        <dbReference type="HAMAP-Rule" id="MF_00302"/>
    </source>
</evidence>
<evidence type="ECO:0000256" key="2">
    <source>
        <dbReference type="SAM" id="MobiDB-lite"/>
    </source>
</evidence>
<reference key="1">
    <citation type="submission" date="2006-02" db="EMBL/GenBank/DDBJ databases">
        <title>Complete sequence of chromosome of Rhodoferax ferrireducens DSM 15236.</title>
        <authorList>
            <person name="Copeland A."/>
            <person name="Lucas S."/>
            <person name="Lapidus A."/>
            <person name="Barry K."/>
            <person name="Detter J.C."/>
            <person name="Glavina del Rio T."/>
            <person name="Hammon N."/>
            <person name="Israni S."/>
            <person name="Pitluck S."/>
            <person name="Brettin T."/>
            <person name="Bruce D."/>
            <person name="Han C."/>
            <person name="Tapia R."/>
            <person name="Gilna P."/>
            <person name="Kiss H."/>
            <person name="Schmutz J."/>
            <person name="Larimer F."/>
            <person name="Land M."/>
            <person name="Kyrpides N."/>
            <person name="Ivanova N."/>
            <person name="Richardson P."/>
        </authorList>
    </citation>
    <scope>NUCLEOTIDE SEQUENCE [LARGE SCALE GENOMIC DNA]</scope>
    <source>
        <strain>ATCC BAA-621 / DSM 15236 / T118</strain>
    </source>
</reference>
<feature type="chain" id="PRO_1000022620" description="ATP-dependent Clp protease adapter protein ClpS">
    <location>
        <begin position="1"/>
        <end position="120"/>
    </location>
</feature>
<feature type="region of interest" description="Disordered" evidence="2">
    <location>
        <begin position="1"/>
        <end position="20"/>
    </location>
</feature>
<protein>
    <recommendedName>
        <fullName evidence="1">ATP-dependent Clp protease adapter protein ClpS</fullName>
    </recommendedName>
</protein>
<name>CLPS_ALBFT</name>
<accession>Q21UT1</accession>
<keyword id="KW-1185">Reference proteome</keyword>
<gene>
    <name evidence="1" type="primary">clpS</name>
    <name type="ordered locus">Rfer_2760</name>
</gene>